<protein>
    <recommendedName>
        <fullName evidence="5">V-type proton ATPase subunit f</fullName>
        <shortName>V-ATPase subunit f</shortName>
    </recommendedName>
</protein>
<evidence type="ECO:0000269" key="1">
    <source>
    </source>
</evidence>
<evidence type="ECO:0000269" key="2">
    <source>
    </source>
</evidence>
<evidence type="ECO:0000269" key="3">
    <source>
    </source>
</evidence>
<evidence type="ECO:0000269" key="4">
    <source>
    </source>
</evidence>
<evidence type="ECO:0000303" key="5">
    <source>
    </source>
</evidence>
<evidence type="ECO:0000305" key="6">
    <source>
    </source>
</evidence>
<evidence type="ECO:0000312" key="7">
    <source>
        <dbReference type="SGD" id="S000028515"/>
    </source>
</evidence>
<evidence type="ECO:0007744" key="8">
    <source>
        <dbReference type="PDB" id="6C6L"/>
    </source>
</evidence>
<evidence type="ECO:0007744" key="9">
    <source>
        <dbReference type="PDB" id="6M0R"/>
    </source>
</evidence>
<evidence type="ECO:0007744" key="10">
    <source>
        <dbReference type="PDB" id="6M0S"/>
    </source>
</evidence>
<evidence type="ECO:0007744" key="11">
    <source>
        <dbReference type="PDB" id="6O7T"/>
    </source>
</evidence>
<evidence type="ECO:0007744" key="12">
    <source>
        <dbReference type="PDB" id="6O7U"/>
    </source>
</evidence>
<evidence type="ECO:0007744" key="13">
    <source>
        <dbReference type="PDB" id="6O7V"/>
    </source>
</evidence>
<evidence type="ECO:0007744" key="14">
    <source>
        <dbReference type="PDB" id="6O7W"/>
    </source>
</evidence>
<evidence type="ECO:0007744" key="15">
    <source>
        <dbReference type="PDB" id="6O7X"/>
    </source>
</evidence>
<evidence type="ECO:0007829" key="16">
    <source>
        <dbReference type="PDB" id="8EAS"/>
    </source>
</evidence>
<dbReference type="EMBL" id="U25840">
    <property type="status" value="NOT_ANNOTATED_CDS"/>
    <property type="molecule type" value="Genomic_DNA"/>
</dbReference>
<dbReference type="EMBL" id="U25842">
    <property type="status" value="NOT_ANNOTATED_CDS"/>
    <property type="molecule type" value="Genomic_DNA"/>
</dbReference>
<dbReference type="EMBL" id="BK006949">
    <property type="protein sequence ID" value="DAA11587.1"/>
    <property type="molecule type" value="Genomic_DNA"/>
</dbReference>
<dbReference type="RefSeq" id="NP_001106949.1">
    <property type="nucleotide sequence ID" value="NM_001184525.1"/>
</dbReference>
<dbReference type="PDB" id="6C6L">
    <property type="method" value="EM"/>
    <property type="resolution" value="3.50 A"/>
    <property type="chains" value="O=1-85"/>
</dbReference>
<dbReference type="PDB" id="6M0R">
    <property type="method" value="EM"/>
    <property type="resolution" value="2.70 A"/>
    <property type="chains" value="O=7-75"/>
</dbReference>
<dbReference type="PDB" id="6M0S">
    <property type="method" value="EM"/>
    <property type="resolution" value="3.60 A"/>
    <property type="chains" value="O=7-75"/>
</dbReference>
<dbReference type="PDB" id="6O7T">
    <property type="method" value="EM"/>
    <property type="resolution" value="3.20 A"/>
    <property type="chains" value="f=1-85"/>
</dbReference>
<dbReference type="PDB" id="6O7U">
    <property type="method" value="EM"/>
    <property type="resolution" value="3.10 A"/>
    <property type="chains" value="f=1-85"/>
</dbReference>
<dbReference type="PDB" id="6O7V">
    <property type="method" value="EM"/>
    <property type="resolution" value="6.60 A"/>
    <property type="chains" value="f=1-85"/>
</dbReference>
<dbReference type="PDB" id="6O7W">
    <property type="method" value="EM"/>
    <property type="resolution" value="7.00 A"/>
    <property type="chains" value="f=1-85"/>
</dbReference>
<dbReference type="PDB" id="6O7X">
    <property type="method" value="EM"/>
    <property type="resolution" value="8.70 A"/>
    <property type="chains" value="f=1-85"/>
</dbReference>
<dbReference type="PDB" id="6PE4">
    <property type="method" value="EM"/>
    <property type="resolution" value="3.10 A"/>
    <property type="chains" value="F=1-85"/>
</dbReference>
<dbReference type="PDB" id="6PE5">
    <property type="method" value="EM"/>
    <property type="resolution" value="3.20 A"/>
    <property type="chains" value="F=1-85"/>
</dbReference>
<dbReference type="PDB" id="7FDA">
    <property type="method" value="EM"/>
    <property type="resolution" value="4.20 A"/>
    <property type="chains" value="f=1-85"/>
</dbReference>
<dbReference type="PDB" id="7FDB">
    <property type="method" value="EM"/>
    <property type="resolution" value="4.80 A"/>
    <property type="chains" value="f=1-85"/>
</dbReference>
<dbReference type="PDB" id="7FDC">
    <property type="method" value="EM"/>
    <property type="resolution" value="6.60 A"/>
    <property type="chains" value="f=1-85"/>
</dbReference>
<dbReference type="PDB" id="7TAO">
    <property type="method" value="EM"/>
    <property type="resolution" value="3.20 A"/>
    <property type="chains" value="O=1-85"/>
</dbReference>
<dbReference type="PDB" id="7TAP">
    <property type="method" value="EM"/>
    <property type="resolution" value="2.80 A"/>
    <property type="chains" value="O=1-85"/>
</dbReference>
<dbReference type="PDB" id="7TMR">
    <property type="method" value="EM"/>
    <property type="resolution" value="3.50 A"/>
    <property type="chains" value="f=1-85"/>
</dbReference>
<dbReference type="PDB" id="7TMS">
    <property type="method" value="EM"/>
    <property type="resolution" value="3.80 A"/>
    <property type="chains" value="f=1-85"/>
</dbReference>
<dbReference type="PDB" id="7TMT">
    <property type="method" value="EM"/>
    <property type="resolution" value="3.80 A"/>
    <property type="chains" value="f=1-85"/>
</dbReference>
<dbReference type="PDB" id="8EAS">
    <property type="method" value="EM"/>
    <property type="resolution" value="2.60 A"/>
    <property type="chains" value="f=1-85"/>
</dbReference>
<dbReference type="PDB" id="8EAU">
    <property type="method" value="EM"/>
    <property type="resolution" value="3.10 A"/>
    <property type="chains" value="f=1-85"/>
</dbReference>
<dbReference type="PDB" id="9E76">
    <property type="method" value="EM"/>
    <property type="resolution" value="3.40 A"/>
    <property type="chains" value="O=1-85"/>
</dbReference>
<dbReference type="PDB" id="9E7L">
    <property type="method" value="EM"/>
    <property type="resolution" value="3.33 A"/>
    <property type="chains" value="O=1-85"/>
</dbReference>
<dbReference type="PDB" id="9MJ4">
    <property type="method" value="EM"/>
    <property type="resolution" value="3.70 A"/>
    <property type="chains" value="O=1-85"/>
</dbReference>
<dbReference type="PDBsum" id="6C6L"/>
<dbReference type="PDBsum" id="6M0R"/>
<dbReference type="PDBsum" id="6M0S"/>
<dbReference type="PDBsum" id="6O7T"/>
<dbReference type="PDBsum" id="6O7U"/>
<dbReference type="PDBsum" id="6O7V"/>
<dbReference type="PDBsum" id="6O7W"/>
<dbReference type="PDBsum" id="6O7X"/>
<dbReference type="PDBsum" id="6PE4"/>
<dbReference type="PDBsum" id="6PE5"/>
<dbReference type="PDBsum" id="7FDA"/>
<dbReference type="PDBsum" id="7FDB"/>
<dbReference type="PDBsum" id="7FDC"/>
<dbReference type="PDBsum" id="7TAO"/>
<dbReference type="PDBsum" id="7TAP"/>
<dbReference type="PDBsum" id="7TMR"/>
<dbReference type="PDBsum" id="7TMS"/>
<dbReference type="PDBsum" id="7TMT"/>
<dbReference type="PDBsum" id="8EAS"/>
<dbReference type="PDBsum" id="8EAU"/>
<dbReference type="PDBsum" id="9E76"/>
<dbReference type="PDBsum" id="9E7L"/>
<dbReference type="PDBsum" id="9MJ4"/>
<dbReference type="EMDB" id="EMD-0644"/>
<dbReference type="EMDB" id="EMD-0645"/>
<dbReference type="EMDB" id="EMD-0646"/>
<dbReference type="EMDB" id="EMD-0647"/>
<dbReference type="EMDB" id="EMD-0648"/>
<dbReference type="EMDB" id="EMD-20322"/>
<dbReference type="EMDB" id="EMD-20323"/>
<dbReference type="EMDB" id="EMD-25779"/>
<dbReference type="EMDB" id="EMD-25780"/>
<dbReference type="EMDB" id="EMD-26000"/>
<dbReference type="EMDB" id="EMD-26001"/>
<dbReference type="EMDB" id="EMD-26002"/>
<dbReference type="EMDB" id="EMD-27984"/>
<dbReference type="EMDB" id="EMD-27986"/>
<dbReference type="EMDB" id="EMD-30034"/>
<dbReference type="EMDB" id="EMD-30035"/>
<dbReference type="EMDB" id="EMD-31538"/>
<dbReference type="EMDB" id="EMD-31539"/>
<dbReference type="EMDB" id="EMD-31540"/>
<dbReference type="EMDB" id="EMD-47659"/>
<dbReference type="EMDB" id="EMD-47679"/>
<dbReference type="EMDB" id="EMD-48311"/>
<dbReference type="EMDB" id="EMD-7348"/>
<dbReference type="SMR" id="P0C5R9"/>
<dbReference type="BioGRID" id="927818">
    <property type="interactions" value="6"/>
</dbReference>
<dbReference type="ComplexPortal" id="CPX-1192">
    <property type="entry name" value="Vacuolar proton translocating ATPase complex, Golgi variant"/>
</dbReference>
<dbReference type="ComplexPortal" id="CPX-1193">
    <property type="entry name" value="Vacuolar proton translocating ATPase complex, vacuole variant"/>
</dbReference>
<dbReference type="FunCoup" id="P0C5R9">
    <property type="interactions" value="17"/>
</dbReference>
<dbReference type="STRING" id="4932.YPR170W-B"/>
<dbReference type="iPTMnet" id="P0C5R9"/>
<dbReference type="PaxDb" id="4932-YPR170W-B"/>
<dbReference type="PeptideAtlas" id="P0C5R9"/>
<dbReference type="EnsemblFungi" id="YPR170W-B_mRNA">
    <property type="protein sequence ID" value="YPR170W-B"/>
    <property type="gene ID" value="YPR170W-B"/>
</dbReference>
<dbReference type="GeneID" id="5848745"/>
<dbReference type="KEGG" id="sce:YPR170W-B"/>
<dbReference type="AGR" id="SGD:S000028515"/>
<dbReference type="SGD" id="S000028515">
    <property type="gene designation" value="YPR170W-B"/>
</dbReference>
<dbReference type="VEuPathDB" id="FungiDB:YPR170W-B"/>
<dbReference type="eggNOG" id="ENOG502S504">
    <property type="taxonomic scope" value="Eukaryota"/>
</dbReference>
<dbReference type="GeneTree" id="ENSGT00940000176787"/>
<dbReference type="HOGENOM" id="CLU_115063_1_0_1"/>
<dbReference type="InParanoid" id="P0C5R9"/>
<dbReference type="OMA" id="LNAWSCV"/>
<dbReference type="OrthoDB" id="67317at2759"/>
<dbReference type="BioCyc" id="YEAST:G3O-34362-MONOMER"/>
<dbReference type="BioGRID-ORCS" id="5848745">
    <property type="hits" value="0 hits in 10 CRISPR screens"/>
</dbReference>
<dbReference type="PRO" id="PR:P0C5R9"/>
<dbReference type="Proteomes" id="UP000002311">
    <property type="component" value="Chromosome XVI"/>
</dbReference>
<dbReference type="RNAct" id="P0C5R9">
    <property type="molecule type" value="protein"/>
</dbReference>
<dbReference type="GO" id="GO:0005789">
    <property type="term" value="C:endoplasmic reticulum membrane"/>
    <property type="evidence" value="ECO:0007669"/>
    <property type="project" value="UniProtKB-SubCell"/>
</dbReference>
<dbReference type="GO" id="GO:0000329">
    <property type="term" value="C:fungal-type vacuole membrane"/>
    <property type="evidence" value="ECO:0000303"/>
    <property type="project" value="ComplexPortal"/>
</dbReference>
<dbReference type="GO" id="GO:0000139">
    <property type="term" value="C:Golgi membrane"/>
    <property type="evidence" value="ECO:0000303"/>
    <property type="project" value="ComplexPortal"/>
</dbReference>
<dbReference type="GO" id="GO:0033176">
    <property type="term" value="C:proton-transporting V-type ATPase complex"/>
    <property type="evidence" value="ECO:0000353"/>
    <property type="project" value="ComplexPortal"/>
</dbReference>
<dbReference type="GO" id="GO:0016471">
    <property type="term" value="C:vacuolar proton-transporting V-type ATPase complex"/>
    <property type="evidence" value="ECO:0000353"/>
    <property type="project" value="ComplexPortal"/>
</dbReference>
<dbReference type="GO" id="GO:0000220">
    <property type="term" value="C:vacuolar proton-transporting V-type ATPase, V0 domain"/>
    <property type="evidence" value="ECO:0000314"/>
    <property type="project" value="UniProtKB"/>
</dbReference>
<dbReference type="GO" id="GO:0046961">
    <property type="term" value="F:proton-transporting ATPase activity, rotational mechanism"/>
    <property type="evidence" value="ECO:0000305"/>
    <property type="project" value="UniProtKB"/>
</dbReference>
<dbReference type="GO" id="GO:0004521">
    <property type="term" value="F:RNA endonuclease activity"/>
    <property type="evidence" value="ECO:0000318"/>
    <property type="project" value="GO_Central"/>
</dbReference>
<dbReference type="GO" id="GO:0048388">
    <property type="term" value="P:endosomal lumen acidification"/>
    <property type="evidence" value="ECO:0000303"/>
    <property type="project" value="ComplexPortal"/>
</dbReference>
<dbReference type="GO" id="GO:0061795">
    <property type="term" value="P:Golgi lumen acidification"/>
    <property type="evidence" value="ECO:0000303"/>
    <property type="project" value="ComplexPortal"/>
</dbReference>
<dbReference type="GO" id="GO:1902600">
    <property type="term" value="P:proton transmembrane transport"/>
    <property type="evidence" value="ECO:0000314"/>
    <property type="project" value="ComplexPortal"/>
</dbReference>
<dbReference type="GO" id="GO:0007035">
    <property type="term" value="P:vacuolar acidification"/>
    <property type="evidence" value="ECO:0000303"/>
    <property type="project" value="ComplexPortal"/>
</dbReference>
<dbReference type="InterPro" id="IPR056552">
    <property type="entry name" value="Ribonucl_Kappa"/>
</dbReference>
<dbReference type="InterPro" id="IPR026770">
    <property type="entry name" value="RNase_K"/>
</dbReference>
<dbReference type="PANTHER" id="PTHR31733">
    <property type="entry name" value="RIBONUCLEASE KAPPA"/>
    <property type="match status" value="1"/>
</dbReference>
<dbReference type="Pfam" id="PF23489">
    <property type="entry name" value="V-ATPase_su_f"/>
    <property type="match status" value="1"/>
</dbReference>
<name>RNK_YEAST</name>
<sequence length="85" mass="9361">MRPVVSTGKAWCCTVLSAFGVVILSVIAHLFNTNHESFVGSINDPEDGPAVAHTVYLAALVYLVFFVFCGFQVYLARRKPSIELR</sequence>
<feature type="chain" id="PRO_0000309067" description="V-type proton ATPase subunit f">
    <location>
        <begin position="1"/>
        <end position="85"/>
    </location>
</feature>
<feature type="topological domain" description="Lumenal" evidence="3">
    <location>
        <begin position="1"/>
        <end position="10"/>
    </location>
</feature>
<feature type="transmembrane region" description="Helical" evidence="3">
    <location>
        <begin position="11"/>
        <end position="31"/>
    </location>
</feature>
<feature type="topological domain" description="Cytoplasmic" evidence="3">
    <location>
        <begin position="32"/>
        <end position="54"/>
    </location>
</feature>
<feature type="transmembrane region" description="Helical" evidence="3">
    <location>
        <begin position="55"/>
        <end position="75"/>
    </location>
</feature>
<feature type="topological domain" description="Lumenal" evidence="3">
    <location>
        <begin position="76"/>
        <end position="85"/>
    </location>
</feature>
<feature type="helix" evidence="16">
    <location>
        <begin position="8"/>
        <end position="32"/>
    </location>
</feature>
<feature type="helix" evidence="16">
    <location>
        <begin position="36"/>
        <end position="39"/>
    </location>
</feature>
<feature type="strand" evidence="16">
    <location>
        <begin position="40"/>
        <end position="44"/>
    </location>
</feature>
<feature type="helix" evidence="16">
    <location>
        <begin position="49"/>
        <end position="75"/>
    </location>
</feature>
<proteinExistence type="inferred from homology"/>
<reference key="1">
    <citation type="journal article" date="1997" name="Nature">
        <title>The nucleotide sequence of Saccharomyces cerevisiae chromosome XVI.</title>
        <authorList>
            <person name="Bussey H."/>
            <person name="Storms R.K."/>
            <person name="Ahmed A."/>
            <person name="Albermann K."/>
            <person name="Allen E."/>
            <person name="Ansorge W."/>
            <person name="Araujo R."/>
            <person name="Aparicio A."/>
            <person name="Barrell B.G."/>
            <person name="Badcock K."/>
            <person name="Benes V."/>
            <person name="Botstein D."/>
            <person name="Bowman S."/>
            <person name="Brueckner M."/>
            <person name="Carpenter J."/>
            <person name="Cherry J.M."/>
            <person name="Chung E."/>
            <person name="Churcher C.M."/>
            <person name="Coster F."/>
            <person name="Davis K."/>
            <person name="Davis R.W."/>
            <person name="Dietrich F.S."/>
            <person name="Delius H."/>
            <person name="DiPaolo T."/>
            <person name="Dubois E."/>
            <person name="Duesterhoeft A."/>
            <person name="Duncan M."/>
            <person name="Floeth M."/>
            <person name="Fortin N."/>
            <person name="Friesen J.D."/>
            <person name="Fritz C."/>
            <person name="Goffeau A."/>
            <person name="Hall J."/>
            <person name="Hebling U."/>
            <person name="Heumann K."/>
            <person name="Hilbert H."/>
            <person name="Hillier L.W."/>
            <person name="Hunicke-Smith S."/>
            <person name="Hyman R.W."/>
            <person name="Johnston M."/>
            <person name="Kalman S."/>
            <person name="Kleine K."/>
            <person name="Komp C."/>
            <person name="Kurdi O."/>
            <person name="Lashkari D."/>
            <person name="Lew H."/>
            <person name="Lin A."/>
            <person name="Lin D."/>
            <person name="Louis E.J."/>
            <person name="Marathe R."/>
            <person name="Messenguy F."/>
            <person name="Mewes H.-W."/>
            <person name="Mirtipati S."/>
            <person name="Moestl D."/>
            <person name="Mueller-Auer S."/>
            <person name="Namath A."/>
            <person name="Nentwich U."/>
            <person name="Oefner P."/>
            <person name="Pearson D."/>
            <person name="Petel F.X."/>
            <person name="Pohl T.M."/>
            <person name="Purnelle B."/>
            <person name="Rajandream M.A."/>
            <person name="Rechmann S."/>
            <person name="Rieger M."/>
            <person name="Riles L."/>
            <person name="Roberts D."/>
            <person name="Schaefer M."/>
            <person name="Scharfe M."/>
            <person name="Scherens B."/>
            <person name="Schramm S."/>
            <person name="Schroeder M."/>
            <person name="Sdicu A.-M."/>
            <person name="Tettelin H."/>
            <person name="Urrestarazu L.A."/>
            <person name="Ushinsky S."/>
            <person name="Vierendeels F."/>
            <person name="Vissers S."/>
            <person name="Voss H."/>
            <person name="Walsh S.V."/>
            <person name="Wambutt R."/>
            <person name="Wang Y."/>
            <person name="Wedler E."/>
            <person name="Wedler H."/>
            <person name="Winnett E."/>
            <person name="Zhong W.-W."/>
            <person name="Zollner A."/>
            <person name="Vo D.H."/>
            <person name="Hani J."/>
        </authorList>
    </citation>
    <scope>NUCLEOTIDE SEQUENCE [LARGE SCALE GENOMIC DNA]</scope>
    <source>
        <strain>ATCC 204508 / S288c</strain>
    </source>
</reference>
<reference key="2">
    <citation type="journal article" date="2014" name="G3 (Bethesda)">
        <title>The reference genome sequence of Saccharomyces cerevisiae: Then and now.</title>
        <authorList>
            <person name="Engel S.R."/>
            <person name="Dietrich F.S."/>
            <person name="Fisk D.G."/>
            <person name="Binkley G."/>
            <person name="Balakrishnan R."/>
            <person name="Costanzo M.C."/>
            <person name="Dwight S.S."/>
            <person name="Hitz B.C."/>
            <person name="Karra K."/>
            <person name="Nash R.S."/>
            <person name="Weng S."/>
            <person name="Wong E.D."/>
            <person name="Lloyd P."/>
            <person name="Skrzypek M.S."/>
            <person name="Miyasato S.R."/>
            <person name="Simison M."/>
            <person name="Cherry J.M."/>
        </authorList>
    </citation>
    <scope>GENOME REANNOTATION</scope>
    <source>
        <strain>ATCC 204508 / S288c</strain>
    </source>
</reference>
<reference key="3">
    <citation type="journal article" date="2003" name="Genome Biol.">
        <title>Reinvestigation of the Saccharomyces cerevisiae genome annotation by comparison to the genome of a related fungus: Ashbya gossypii.</title>
        <authorList>
            <person name="Brachat S."/>
            <person name="Dietrich F.S."/>
            <person name="Voegeli S."/>
            <person name="Zhang Z."/>
            <person name="Stuart L."/>
            <person name="Lerch A."/>
            <person name="Gates K."/>
            <person name="Gaffney T.D."/>
            <person name="Philippsen P."/>
        </authorList>
    </citation>
    <scope>GENOME REANNOTATION</scope>
</reference>
<reference key="4">
    <citation type="journal article" date="2003" name="Science">
        <title>Finding functional features in Saccharomyces genomes by phylogenetic footprinting.</title>
        <authorList>
            <person name="Cliften P.F."/>
            <person name="Sudarsanam P."/>
            <person name="Desikan A."/>
            <person name="Fulton L."/>
            <person name="Fulton B."/>
            <person name="Majors J."/>
            <person name="Waterston R."/>
            <person name="Cohen B.A."/>
            <person name="Johnston M."/>
        </authorList>
    </citation>
    <scope>GENOME REANNOTATION</scope>
</reference>
<reference key="5">
    <citation type="journal article" date="2016" name="Nature">
        <title>Atomic model for the membrane-embedded VO motor of a eukaryotic V-ATPase.</title>
        <authorList>
            <person name="Mazhab-Jafari M.T."/>
            <person name="Rohou A."/>
            <person name="Schmidt C."/>
            <person name="Bueler S.A."/>
            <person name="Benlekbir S."/>
            <person name="Robinson C.V."/>
            <person name="Rubinstein J.L."/>
        </authorList>
    </citation>
    <scope>IDENTIFICATION IN THE V-ATPASE COMPLEX</scope>
</reference>
<reference key="6">
    <citation type="journal article" date="2016" name="Nat. Methods">
        <title>One library to make them all: streamlining the creation of yeast libraries via a SWAp-Tag strategy.</title>
        <authorList>
            <person name="Yofe I."/>
            <person name="Weill U."/>
            <person name="Meurer M."/>
            <person name="Chuartzman S."/>
            <person name="Zalckvar E."/>
            <person name="Goldman O."/>
            <person name="Ben-Dor S."/>
            <person name="Schuetze C."/>
            <person name="Wiedemann N."/>
            <person name="Knop M."/>
            <person name="Khmelinskii A."/>
            <person name="Schuldiner M."/>
        </authorList>
    </citation>
    <scope>SUBCELLULAR LOCATION</scope>
</reference>
<reference key="7">
    <citation type="journal article" date="2018" name="J. Proteome Res.">
        <title>Enrichment-based proteogenomics identifies microproteins, missing proteins, and novel smORFs in Saccharomyces cerevisiae.</title>
        <authorList>
            <person name="He C."/>
            <person name="Jia C."/>
            <person name="Zhang Y."/>
            <person name="Xu P."/>
        </authorList>
    </citation>
    <scope>IDENTIFICATION BY MASS SPECTROMETRY</scope>
</reference>
<reference evidence="8" key="8">
    <citation type="journal article" date="2018" name="Mol. Cell">
        <title>The 3.5-A cryoEM structure of nanodisc-reconstituted yeast vacuolar ATPase V0 proton channel.</title>
        <authorList>
            <person name="Roh S.H."/>
            <person name="Stam N.J."/>
            <person name="Hryc C.F."/>
            <person name="Couoh-Cardel S."/>
            <person name="Pintilie G."/>
            <person name="Chiu W."/>
            <person name="Wilkens S."/>
        </authorList>
    </citation>
    <scope>STRUCTURE BY ELECTRON MICROSCOPY (3.50 ANGSTROMS)</scope>
    <scope>IDENTIFICATION IN THE V-ATPASE COMPLEX</scope>
</reference>
<reference evidence="11 12 13 14 15" key="9">
    <citation type="journal article" date="2019" name="Proc. Natl. Acad. Sci. U.S.A.">
        <title>Structural comparison of the vacuolar and Golgi V-ATPases from Saccharomyces cerevisiae.</title>
        <authorList>
            <person name="Vasanthakumar T."/>
            <person name="Bueler S.A."/>
            <person name="Wu D."/>
            <person name="Beilsten-Edmands V."/>
            <person name="Robinson C.V."/>
            <person name="Rubinstein J.L."/>
        </authorList>
    </citation>
    <scope>STRUCTURE BY ELECTRON MICROSCOPY (3.10 ANGSTROMS)</scope>
</reference>
<reference evidence="9 10" key="10">
    <citation type="journal article" date="2020" name="Sci. Adv.">
        <title>Cryo-EM and MD infer water-mediated proton transport and autoinhibition mechanisms of Vo complex.</title>
        <authorList>
            <person name="Roh S.H."/>
            <person name="Shekhar M."/>
            <person name="Pintilie G."/>
            <person name="Chipot C."/>
            <person name="Wilkens S."/>
            <person name="Singharoy A."/>
            <person name="Chiu W."/>
        </authorList>
    </citation>
    <scope>STRUCTURE BY ELECTRON MICROSCOPY (2.70 ANGSTROMS) OF 7-75</scope>
</reference>
<comment type="function">
    <text evidence="2">Accessory component of the V0 complex of vacuolar(H+)-ATPase (V-ATPase), a multisubunit enzyme composed of a peripheral complex (V1) that hydrolyzes ATP and a membrane integral complex (V0) that translocates protons (PubMed:29526695). V-ATPase is responsible for acidifying and maintaining the pH of intracellular compartments (PubMed:29526695).</text>
</comment>
<comment type="subunit">
    <text evidence="2 3 4">V-ATPase is a heteromultimeric enzyme composed of a peripheral catalytic V1 complex (components A to H) attached to an integral membrane V0 proton pore complex (components: a, c, c', c'', d, e, f and VOA1).</text>
</comment>
<comment type="subcellular location">
    <subcellularLocation>
        <location evidence="3 6">Endoplasmic reticulum membrane</location>
        <topology evidence="2 3">Multi-pass membrane protein</topology>
    </subcellularLocation>
    <subcellularLocation>
        <location evidence="1 3">Vacuole membrane</location>
        <topology evidence="3">Multi-pass membrane protein</topology>
    </subcellularLocation>
</comment>
<gene>
    <name evidence="7" type="ordered locus">YPR170W-B</name>
</gene>
<accession>P0C5R9</accession>
<accession>D6W4H1</accession>
<organism>
    <name type="scientific">Saccharomyces cerevisiae (strain ATCC 204508 / S288c)</name>
    <name type="common">Baker's yeast</name>
    <dbReference type="NCBI Taxonomy" id="559292"/>
    <lineage>
        <taxon>Eukaryota</taxon>
        <taxon>Fungi</taxon>
        <taxon>Dikarya</taxon>
        <taxon>Ascomycota</taxon>
        <taxon>Saccharomycotina</taxon>
        <taxon>Saccharomycetes</taxon>
        <taxon>Saccharomycetales</taxon>
        <taxon>Saccharomycetaceae</taxon>
        <taxon>Saccharomyces</taxon>
    </lineage>
</organism>
<keyword id="KW-0002">3D-structure</keyword>
<keyword id="KW-0256">Endoplasmic reticulum</keyword>
<keyword id="KW-0472">Membrane</keyword>
<keyword id="KW-1185">Reference proteome</keyword>
<keyword id="KW-0812">Transmembrane</keyword>
<keyword id="KW-1133">Transmembrane helix</keyword>
<keyword id="KW-0926">Vacuole</keyword>